<comment type="function">
    <text evidence="1">In addition to polymerase activity, this DNA polymerase exhibits 3'-5' and 5'-3' exonuclease activity.</text>
</comment>
<comment type="catalytic activity">
    <reaction>
        <text>DNA(n) + a 2'-deoxyribonucleoside 5'-triphosphate = DNA(n+1) + diphosphate</text>
        <dbReference type="Rhea" id="RHEA:22508"/>
        <dbReference type="Rhea" id="RHEA-COMP:17339"/>
        <dbReference type="Rhea" id="RHEA-COMP:17340"/>
        <dbReference type="ChEBI" id="CHEBI:33019"/>
        <dbReference type="ChEBI" id="CHEBI:61560"/>
        <dbReference type="ChEBI" id="CHEBI:173112"/>
        <dbReference type="EC" id="2.7.7.7"/>
    </reaction>
</comment>
<comment type="subunit">
    <text>Single-chain monomer with multiple functions.</text>
</comment>
<comment type="similarity">
    <text evidence="3">Belongs to the DNA polymerase type-A family.</text>
</comment>
<organism>
    <name type="scientific">Lactococcus lactis subsp. lactis (strain IL1403)</name>
    <name type="common">Streptococcus lactis</name>
    <dbReference type="NCBI Taxonomy" id="272623"/>
    <lineage>
        <taxon>Bacteria</taxon>
        <taxon>Bacillati</taxon>
        <taxon>Bacillota</taxon>
        <taxon>Bacilli</taxon>
        <taxon>Lactobacillales</taxon>
        <taxon>Streptococcaceae</taxon>
        <taxon>Lactococcus</taxon>
    </lineage>
</organism>
<name>DPO1_LACLA</name>
<reference key="1">
    <citation type="journal article" date="2001" name="Genome Res.">
        <title>The complete genome sequence of the lactic acid bacterium Lactococcus lactis ssp. lactis IL1403.</title>
        <authorList>
            <person name="Bolotin A."/>
            <person name="Wincker P."/>
            <person name="Mauger S."/>
            <person name="Jaillon O."/>
            <person name="Malarme K."/>
            <person name="Weissenbach J."/>
            <person name="Ehrlich S.D."/>
            <person name="Sorokin A."/>
        </authorList>
    </citation>
    <scope>NUCLEOTIDE SEQUENCE [LARGE SCALE GENOMIC DNA]</scope>
    <source>
        <strain>IL1403</strain>
    </source>
</reference>
<evidence type="ECO:0000250" key="1"/>
<evidence type="ECO:0000255" key="2"/>
<evidence type="ECO:0000305" key="3"/>
<accession>Q9CDS1</accession>
<gene>
    <name type="primary">polA</name>
    <name type="ordered locus">LL2142</name>
    <name type="ORF">L0270</name>
</gene>
<feature type="chain" id="PRO_0000101243" description="DNA polymerase I">
    <location>
        <begin position="1"/>
        <end position="877"/>
    </location>
</feature>
<feature type="domain" description="5'-3' exonuclease" evidence="2">
    <location>
        <begin position="180"/>
        <end position="270"/>
    </location>
</feature>
<feature type="domain" description="3'-5' exonuclease" evidence="2">
    <location>
        <begin position="308"/>
        <end position="468"/>
    </location>
</feature>
<sequence length="877" mass="98733">MENKDRLLLIDGSSVAFRAFFALYNQIDRFKAPNGLHTNAIFAFHTMLSSLMERIEPTHVLIAFDAGKTTFRTEMFADYKGGRSKTPDEFREQLPFIKEMIEKLGIRHYELANYEADDIIGTLDKMAEAPNVNFDVTIVTGDKDMIQLVDGNTRVEISKKGVAEFEEFTPDYLLEKMGLTPAQFIDLKALMGDSSDNYPGVTKVGEKTGLKLLQEFGSLENLYENVDSLKASKMKENLIADKEMAFLSQQLATINTKAPIEIGLDDTLLKGKKVDELSQFYDEMGFAQFKSKLLAEAGGEVTDEKVVDEIDFEIVTDGSISEKVNADDFFYLETLGENYHREQIVAFAWGNAEKIYVSKNIDLLTKMKFPENTYDFKKNRVLLSHLDIELPLVKFDAMLAKYLISTTEDNKISTIARLFNSGHLATDEEIFGKGTKIALPDDAVLFEHLARKIKVLALAKEKMMAELLENEQEHLLSDMELPLAEVLAKMEITGIAVSQNTLEEIGAENEEKLASLTREIYDLAGEEFNINSPKQLGVILFEKLQLPVGKKTKTGYSTAVDVLEDLAALSPVVAKILEYRQINKVQSTYVKGLIPQIADDGKIHTRYVQDLTQTGRLSSVDPNLQNIPVRLEEGRKIRKAFVPSKDSLLLSSDYSQIELRVLAHISGDEHLIDAFKHGADIHTSTAMRVFGIEKAEDVTANDRRNAKAVNFGVVYGISDFGLARNLGITRKDAKNYIETYFERYPGIKTYMENIVREARDKGFVETMSHRRRKIPDINARNFNVRGFAERTAINSPIQGSAADILKIAMINLDKALSARDFKSKLLLQVHDEIILDVPLEELDEIKVLVKQTMEEAIELAVPLKVDENTGKTWYEAK</sequence>
<protein>
    <recommendedName>
        <fullName>DNA polymerase I</fullName>
        <shortName>POL I</shortName>
        <ecNumber>2.7.7.7</ecNumber>
    </recommendedName>
</protein>
<dbReference type="EC" id="2.7.7.7"/>
<dbReference type="EMBL" id="AE005176">
    <property type="protein sequence ID" value="AAK06240.1"/>
    <property type="molecule type" value="Genomic_DNA"/>
</dbReference>
<dbReference type="PIR" id="F86892">
    <property type="entry name" value="F86892"/>
</dbReference>
<dbReference type="RefSeq" id="NP_268299.1">
    <property type="nucleotide sequence ID" value="NC_002662.1"/>
</dbReference>
<dbReference type="RefSeq" id="WP_010906334.1">
    <property type="nucleotide sequence ID" value="NC_002662.1"/>
</dbReference>
<dbReference type="SMR" id="Q9CDS1"/>
<dbReference type="PaxDb" id="272623-L0270"/>
<dbReference type="EnsemblBacteria" id="AAK06240">
    <property type="protein sequence ID" value="AAK06240"/>
    <property type="gene ID" value="L0270"/>
</dbReference>
<dbReference type="KEGG" id="lla:L0270"/>
<dbReference type="PATRIC" id="fig|272623.7.peg.2301"/>
<dbReference type="eggNOG" id="COG0258">
    <property type="taxonomic scope" value="Bacteria"/>
</dbReference>
<dbReference type="eggNOG" id="COG0749">
    <property type="taxonomic scope" value="Bacteria"/>
</dbReference>
<dbReference type="HOGENOM" id="CLU_004675_0_0_9"/>
<dbReference type="OrthoDB" id="9806424at2"/>
<dbReference type="Proteomes" id="UP000002196">
    <property type="component" value="Chromosome"/>
</dbReference>
<dbReference type="GO" id="GO:0008408">
    <property type="term" value="F:3'-5' exonuclease activity"/>
    <property type="evidence" value="ECO:0007669"/>
    <property type="project" value="InterPro"/>
</dbReference>
<dbReference type="GO" id="GO:0008409">
    <property type="term" value="F:5'-3' exonuclease activity"/>
    <property type="evidence" value="ECO:0007669"/>
    <property type="project" value="InterPro"/>
</dbReference>
<dbReference type="GO" id="GO:0003677">
    <property type="term" value="F:DNA binding"/>
    <property type="evidence" value="ECO:0007669"/>
    <property type="project" value="UniProtKB-KW"/>
</dbReference>
<dbReference type="GO" id="GO:0003887">
    <property type="term" value="F:DNA-directed DNA polymerase activity"/>
    <property type="evidence" value="ECO:0007669"/>
    <property type="project" value="UniProtKB-KW"/>
</dbReference>
<dbReference type="GO" id="GO:0006261">
    <property type="term" value="P:DNA-templated DNA replication"/>
    <property type="evidence" value="ECO:0007669"/>
    <property type="project" value="InterPro"/>
</dbReference>
<dbReference type="GO" id="GO:0006302">
    <property type="term" value="P:double-strand break repair"/>
    <property type="evidence" value="ECO:0007669"/>
    <property type="project" value="TreeGrafter"/>
</dbReference>
<dbReference type="CDD" id="cd08637">
    <property type="entry name" value="DNA_pol_A_pol_I_C"/>
    <property type="match status" value="1"/>
</dbReference>
<dbReference type="CDD" id="cd06140">
    <property type="entry name" value="DNA_polA_I_Bacillus_like_exo"/>
    <property type="match status" value="1"/>
</dbReference>
<dbReference type="CDD" id="cd09898">
    <property type="entry name" value="H3TH_53EXO"/>
    <property type="match status" value="1"/>
</dbReference>
<dbReference type="CDD" id="cd09859">
    <property type="entry name" value="PIN_53EXO"/>
    <property type="match status" value="1"/>
</dbReference>
<dbReference type="FunFam" id="1.10.150.20:FF:000002">
    <property type="entry name" value="DNA polymerase I"/>
    <property type="match status" value="1"/>
</dbReference>
<dbReference type="FunFam" id="1.10.150.20:FF:000003">
    <property type="entry name" value="DNA polymerase I"/>
    <property type="match status" value="1"/>
</dbReference>
<dbReference type="FunFam" id="1.20.1060.10:FF:000001">
    <property type="entry name" value="DNA polymerase I"/>
    <property type="match status" value="1"/>
</dbReference>
<dbReference type="FunFam" id="3.40.50.1010:FF:000001">
    <property type="entry name" value="DNA polymerase I"/>
    <property type="match status" value="1"/>
</dbReference>
<dbReference type="Gene3D" id="3.30.70.370">
    <property type="match status" value="1"/>
</dbReference>
<dbReference type="Gene3D" id="1.10.150.20">
    <property type="entry name" value="5' to 3' exonuclease, C-terminal subdomain"/>
    <property type="match status" value="2"/>
</dbReference>
<dbReference type="Gene3D" id="3.40.50.1010">
    <property type="entry name" value="5'-nuclease"/>
    <property type="match status" value="1"/>
</dbReference>
<dbReference type="Gene3D" id="3.30.420.10">
    <property type="entry name" value="Ribonuclease H-like superfamily/Ribonuclease H"/>
    <property type="match status" value="1"/>
</dbReference>
<dbReference type="Gene3D" id="1.20.1060.10">
    <property type="entry name" value="Taq DNA Polymerase, Chain T, domain 4"/>
    <property type="match status" value="1"/>
</dbReference>
<dbReference type="InterPro" id="IPR002562">
    <property type="entry name" value="3'-5'_exonuclease_dom"/>
</dbReference>
<dbReference type="InterPro" id="IPR020046">
    <property type="entry name" value="5-3_exonucl_a-hlix_arch_N"/>
</dbReference>
<dbReference type="InterPro" id="IPR002421">
    <property type="entry name" value="5-3_exonuclease"/>
</dbReference>
<dbReference type="InterPro" id="IPR036279">
    <property type="entry name" value="5-3_exonuclease_C_sf"/>
</dbReference>
<dbReference type="InterPro" id="IPR019760">
    <property type="entry name" value="DNA-dir_DNA_pol_A_CS"/>
</dbReference>
<dbReference type="InterPro" id="IPR001098">
    <property type="entry name" value="DNA-dir_DNA_pol_A_palm_dom"/>
</dbReference>
<dbReference type="InterPro" id="IPR043502">
    <property type="entry name" value="DNA/RNA_pol_sf"/>
</dbReference>
<dbReference type="InterPro" id="IPR054690">
    <property type="entry name" value="DNA_polI_exonuclease"/>
</dbReference>
<dbReference type="InterPro" id="IPR020045">
    <property type="entry name" value="DNA_polI_H3TH"/>
</dbReference>
<dbReference type="InterPro" id="IPR018320">
    <property type="entry name" value="DNA_polymerase_1"/>
</dbReference>
<dbReference type="InterPro" id="IPR002298">
    <property type="entry name" value="DNA_polymerase_A"/>
</dbReference>
<dbReference type="InterPro" id="IPR008918">
    <property type="entry name" value="HhH2"/>
</dbReference>
<dbReference type="InterPro" id="IPR029060">
    <property type="entry name" value="PIN-like_dom_sf"/>
</dbReference>
<dbReference type="InterPro" id="IPR012337">
    <property type="entry name" value="RNaseH-like_sf"/>
</dbReference>
<dbReference type="InterPro" id="IPR036397">
    <property type="entry name" value="RNaseH_sf"/>
</dbReference>
<dbReference type="NCBIfam" id="TIGR00593">
    <property type="entry name" value="pola"/>
    <property type="match status" value="1"/>
</dbReference>
<dbReference type="NCBIfam" id="NF004397">
    <property type="entry name" value="PRK05755.1"/>
    <property type="match status" value="1"/>
</dbReference>
<dbReference type="PANTHER" id="PTHR10133">
    <property type="entry name" value="DNA POLYMERASE I"/>
    <property type="match status" value="1"/>
</dbReference>
<dbReference type="PANTHER" id="PTHR10133:SF27">
    <property type="entry name" value="DNA POLYMERASE NU"/>
    <property type="match status" value="1"/>
</dbReference>
<dbReference type="Pfam" id="PF01367">
    <property type="entry name" value="5_3_exonuc"/>
    <property type="match status" value="1"/>
</dbReference>
<dbReference type="Pfam" id="PF02739">
    <property type="entry name" value="5_3_exonuc_N"/>
    <property type="match status" value="1"/>
</dbReference>
<dbReference type="Pfam" id="PF00476">
    <property type="entry name" value="DNA_pol_A"/>
    <property type="match status" value="1"/>
</dbReference>
<dbReference type="Pfam" id="PF22619">
    <property type="entry name" value="DNA_polI_exo1"/>
    <property type="match status" value="1"/>
</dbReference>
<dbReference type="PRINTS" id="PR00868">
    <property type="entry name" value="DNAPOLI"/>
</dbReference>
<dbReference type="SMART" id="SM00474">
    <property type="entry name" value="35EXOc"/>
    <property type="match status" value="1"/>
</dbReference>
<dbReference type="SMART" id="SM00475">
    <property type="entry name" value="53EXOc"/>
    <property type="match status" value="1"/>
</dbReference>
<dbReference type="SMART" id="SM00279">
    <property type="entry name" value="HhH2"/>
    <property type="match status" value="1"/>
</dbReference>
<dbReference type="SMART" id="SM00482">
    <property type="entry name" value="POLAc"/>
    <property type="match status" value="1"/>
</dbReference>
<dbReference type="SUPFAM" id="SSF47807">
    <property type="entry name" value="5' to 3' exonuclease, C-terminal subdomain"/>
    <property type="match status" value="1"/>
</dbReference>
<dbReference type="SUPFAM" id="SSF56672">
    <property type="entry name" value="DNA/RNA polymerases"/>
    <property type="match status" value="1"/>
</dbReference>
<dbReference type="SUPFAM" id="SSF88723">
    <property type="entry name" value="PIN domain-like"/>
    <property type="match status" value="1"/>
</dbReference>
<dbReference type="SUPFAM" id="SSF53098">
    <property type="entry name" value="Ribonuclease H-like"/>
    <property type="match status" value="1"/>
</dbReference>
<dbReference type="PROSITE" id="PS00447">
    <property type="entry name" value="DNA_POLYMERASE_A"/>
    <property type="match status" value="1"/>
</dbReference>
<keyword id="KW-0227">DNA damage</keyword>
<keyword id="KW-0234">DNA repair</keyword>
<keyword id="KW-0235">DNA replication</keyword>
<keyword id="KW-0238">DNA-binding</keyword>
<keyword id="KW-0239">DNA-directed DNA polymerase</keyword>
<keyword id="KW-0269">Exonuclease</keyword>
<keyword id="KW-0378">Hydrolase</keyword>
<keyword id="KW-0540">Nuclease</keyword>
<keyword id="KW-0548">Nucleotidyltransferase</keyword>
<keyword id="KW-1185">Reference proteome</keyword>
<keyword id="KW-0808">Transferase</keyword>
<proteinExistence type="inferred from homology"/>